<feature type="signal peptide" evidence="1">
    <location>
        <begin position="1"/>
        <end position="21"/>
    </location>
</feature>
<feature type="chain" id="PRO_0000363179" description="Porin AaxA">
    <location>
        <begin position="22"/>
        <end position="438"/>
    </location>
</feature>
<protein>
    <recommendedName>
        <fullName>Porin AaxA</fullName>
    </recommendedName>
    <alternativeName>
        <fullName>Outer membrane protein AaxA</fullName>
    </alternativeName>
</protein>
<evidence type="ECO:0000255" key="1"/>
<evidence type="ECO:0000269" key="2">
    <source>
    </source>
</evidence>
<evidence type="ECO:0000305" key="3"/>
<name>AAXA_CHLPN</name>
<sequence length="438" mass="48843">MISFRFLLLSGLCALGISSYAETPKETTGHYHRYKARIQKKHPESIKESAPSETPHHNSLLSPVTNIFCSHPWKDGISVSNLLTSVEKATNTQISLDFSILPQWFYPHKALGQTQALEIPSWQFYFSPSTTWTLYDSPTAGQGIVDFSYTLIHYWQTNGVDANQAAGTASSMNDYSNRENNLAQLTFSQTFPGDFLTLAIGQYSLYAIDGTLYDNDQYSGFISYALSQNASATYSLGSTGAYLQFTPNSEIKVQLGFQDSYNIDGTNFSIYNLTKSKYNFYGYASWTPKPSCGDGQYSVLLYSTRKVPEQNSQVTGWSLNAAQHIHEKLYLFGRINGATGTALPINRSYVLGLVSENPLNRHSQDLLGIGFATNKVNAKAISNVNKLRRYESVMEAFATIGFGPYISLTPDFQLYIHPALRPERRTSQVYGLRANLSL</sequence>
<proteinExistence type="evidence at protein level"/>
<gene>
    <name type="primary">aaxA</name>
    <name type="ordered locus">CPn_1033</name>
    <name type="ordered locus">CP_0819</name>
    <name type="ordered locus">CPj1033</name>
    <name type="ordered locus">CpB1073</name>
</gene>
<comment type="function">
    <text evidence="2">Facilitates L-arginine uptake, as part of the AaxABC system. The arginine uptake by the bacterium in the macrophage may be a virulence factor against the host innate immune response.</text>
</comment>
<comment type="subcellular location">
    <subcellularLocation>
        <location evidence="2">Cell outer membrane</location>
        <topology evidence="2">Multi-pass membrane protein</topology>
    </subcellularLocation>
</comment>
<comment type="miscellaneous">
    <text>Functions optimally at a neutral or moderately acidic pH.</text>
</comment>
<comment type="similarity">
    <text evidence="3">Belongs to the OprB family.</text>
</comment>
<comment type="sequence caution" evidence="3">
    <conflict type="erroneous initiation">
        <sequence resource="EMBL-CDS" id="AAP99002"/>
    </conflict>
</comment>
<dbReference type="EMBL" id="AE001363">
    <property type="protein sequence ID" value="AAD19170.1"/>
    <property type="molecule type" value="Genomic_DNA"/>
</dbReference>
<dbReference type="EMBL" id="AE002161">
    <property type="protein sequence ID" value="AAF38614.1"/>
    <property type="molecule type" value="Genomic_DNA"/>
</dbReference>
<dbReference type="EMBL" id="BA000008">
    <property type="protein sequence ID" value="BAA99240.1"/>
    <property type="molecule type" value="Genomic_DNA"/>
</dbReference>
<dbReference type="EMBL" id="AE009440">
    <property type="protein sequence ID" value="AAP99002.1"/>
    <property type="status" value="ALT_INIT"/>
    <property type="molecule type" value="Genomic_DNA"/>
</dbReference>
<dbReference type="PIR" id="C72006">
    <property type="entry name" value="C72006"/>
</dbReference>
<dbReference type="PIR" id="F86619">
    <property type="entry name" value="F86619"/>
</dbReference>
<dbReference type="RefSeq" id="NP_225227.1">
    <property type="nucleotide sequence ID" value="NC_000922.1"/>
</dbReference>
<dbReference type="RefSeq" id="WP_010883666.1">
    <property type="nucleotide sequence ID" value="NZ_LN847257.1"/>
</dbReference>
<dbReference type="SMR" id="Q9Z6M6"/>
<dbReference type="STRING" id="406984.CPK_ORF00460"/>
<dbReference type="TCDB" id="1.B.23.1.11">
    <property type="family name" value="the cyanobacterial porin (cbp) family"/>
</dbReference>
<dbReference type="KEGG" id="cpa:CP_0819"/>
<dbReference type="KEGG" id="cpj:CPj1033"/>
<dbReference type="KEGG" id="cpn:CPn_1033"/>
<dbReference type="KEGG" id="cpt:CpB1073"/>
<dbReference type="PATRIC" id="fig|115713.3.peg.1131"/>
<dbReference type="eggNOG" id="COG3659">
    <property type="taxonomic scope" value="Bacteria"/>
</dbReference>
<dbReference type="HOGENOM" id="CLU_619231_0_0_0"/>
<dbReference type="OrthoDB" id="18651at2"/>
<dbReference type="Proteomes" id="UP000000583">
    <property type="component" value="Chromosome"/>
</dbReference>
<dbReference type="Proteomes" id="UP000000801">
    <property type="component" value="Chromosome"/>
</dbReference>
<dbReference type="GO" id="GO:0009279">
    <property type="term" value="C:cell outer membrane"/>
    <property type="evidence" value="ECO:0007669"/>
    <property type="project" value="UniProtKB-SubCell"/>
</dbReference>
<dbReference type="GO" id="GO:0046930">
    <property type="term" value="C:pore complex"/>
    <property type="evidence" value="ECO:0007669"/>
    <property type="project" value="UniProtKB-KW"/>
</dbReference>
<dbReference type="GO" id="GO:0015288">
    <property type="term" value="F:porin activity"/>
    <property type="evidence" value="ECO:0007669"/>
    <property type="project" value="UniProtKB-KW"/>
</dbReference>
<dbReference type="GO" id="GO:0006865">
    <property type="term" value="P:amino acid transport"/>
    <property type="evidence" value="ECO:0007669"/>
    <property type="project" value="UniProtKB-KW"/>
</dbReference>
<dbReference type="GO" id="GO:0008643">
    <property type="term" value="P:carbohydrate transport"/>
    <property type="evidence" value="ECO:0007669"/>
    <property type="project" value="InterPro"/>
</dbReference>
<dbReference type="GO" id="GO:0006811">
    <property type="term" value="P:monoatomic ion transport"/>
    <property type="evidence" value="ECO:0007669"/>
    <property type="project" value="UniProtKB-KW"/>
</dbReference>
<dbReference type="Gene3D" id="2.40.160.180">
    <property type="entry name" value="Carbohydrate-selective porin OprB"/>
    <property type="match status" value="1"/>
</dbReference>
<dbReference type="InterPro" id="IPR007049">
    <property type="entry name" value="Carb-sel_porin_OprB"/>
</dbReference>
<dbReference type="InterPro" id="IPR038673">
    <property type="entry name" value="OprB_sf"/>
</dbReference>
<dbReference type="Pfam" id="PF04966">
    <property type="entry name" value="OprB"/>
    <property type="match status" value="1"/>
</dbReference>
<reference key="1">
    <citation type="journal article" date="1999" name="Nat. Genet.">
        <title>Comparative genomes of Chlamydia pneumoniae and C. trachomatis.</title>
        <authorList>
            <person name="Kalman S."/>
            <person name="Mitchell W.P."/>
            <person name="Marathe R."/>
            <person name="Lammel C.J."/>
            <person name="Fan J."/>
            <person name="Hyman R.W."/>
            <person name="Olinger L."/>
            <person name="Grimwood J."/>
            <person name="Davis R.W."/>
            <person name="Stephens R.S."/>
        </authorList>
    </citation>
    <scope>NUCLEOTIDE SEQUENCE [LARGE SCALE GENOMIC DNA]</scope>
    <source>
        <strain>CWL029</strain>
    </source>
</reference>
<reference key="2">
    <citation type="journal article" date="2000" name="Nucleic Acids Res.">
        <title>Genome sequences of Chlamydia trachomatis MoPn and Chlamydia pneumoniae AR39.</title>
        <authorList>
            <person name="Read T.D."/>
            <person name="Brunham R.C."/>
            <person name="Shen C."/>
            <person name="Gill S.R."/>
            <person name="Heidelberg J.F."/>
            <person name="White O."/>
            <person name="Hickey E.K."/>
            <person name="Peterson J.D."/>
            <person name="Utterback T.R."/>
            <person name="Berry K.J."/>
            <person name="Bass S."/>
            <person name="Linher K.D."/>
            <person name="Weidman J.F."/>
            <person name="Khouri H.M."/>
            <person name="Craven B."/>
            <person name="Bowman C."/>
            <person name="Dodson R.J."/>
            <person name="Gwinn M.L."/>
            <person name="Nelson W.C."/>
            <person name="DeBoy R.T."/>
            <person name="Kolonay J.F."/>
            <person name="McClarty G."/>
            <person name="Salzberg S.L."/>
            <person name="Eisen J.A."/>
            <person name="Fraser C.M."/>
        </authorList>
    </citation>
    <scope>NUCLEOTIDE SEQUENCE [LARGE SCALE GENOMIC DNA]</scope>
    <source>
        <strain>AR39</strain>
    </source>
</reference>
<reference key="3">
    <citation type="journal article" date="2000" name="Nucleic Acids Res.">
        <title>Comparison of whole genome sequences of Chlamydia pneumoniae J138 from Japan and CWL029 from USA.</title>
        <authorList>
            <person name="Shirai M."/>
            <person name="Hirakawa H."/>
            <person name="Kimoto M."/>
            <person name="Tabuchi M."/>
            <person name="Kishi F."/>
            <person name="Ouchi K."/>
            <person name="Shiba T."/>
            <person name="Ishii K."/>
            <person name="Hattori M."/>
            <person name="Kuhara S."/>
            <person name="Nakazawa T."/>
        </authorList>
    </citation>
    <scope>NUCLEOTIDE SEQUENCE [LARGE SCALE GENOMIC DNA]</scope>
    <source>
        <strain>J138</strain>
    </source>
</reference>
<reference key="4">
    <citation type="submission" date="2002-05" db="EMBL/GenBank/DDBJ databases">
        <title>The genome sequence of Chlamydia pneumoniae TW183 and comparison with other Chlamydia strains based on whole genome sequence analysis.</title>
        <authorList>
            <person name="Geng M.M."/>
            <person name="Schuhmacher A."/>
            <person name="Muehldorfer I."/>
            <person name="Bensch K.W."/>
            <person name="Schaefer K.P."/>
            <person name="Schneider S."/>
            <person name="Pohl T."/>
            <person name="Essig A."/>
            <person name="Marre R."/>
            <person name="Melchers K."/>
        </authorList>
    </citation>
    <scope>NUCLEOTIDE SEQUENCE [LARGE SCALE GENOMIC DNA]</scope>
    <source>
        <strain>TW-183</strain>
    </source>
</reference>
<reference key="5">
    <citation type="journal article" date="2008" name="J. Bacteriol.">
        <title>Outer and inner membrane proteins compose an arginine-agmatine exchange system in Chlamydophila pneumoniae.</title>
        <authorList>
            <person name="Smith C.B."/>
            <person name="Graham D.E."/>
        </authorList>
    </citation>
    <scope>FUNCTION IN ARGININE UPTAKE</scope>
    <scope>SUBCELLULAR LOCATION</scope>
    <source>
        <strain>Kajaani 6</strain>
    </source>
</reference>
<organism>
    <name type="scientific">Chlamydia pneumoniae</name>
    <name type="common">Chlamydophila pneumoniae</name>
    <dbReference type="NCBI Taxonomy" id="83558"/>
    <lineage>
        <taxon>Bacteria</taxon>
        <taxon>Pseudomonadati</taxon>
        <taxon>Chlamydiota</taxon>
        <taxon>Chlamydiia</taxon>
        <taxon>Chlamydiales</taxon>
        <taxon>Chlamydiaceae</taxon>
        <taxon>Chlamydia/Chlamydophila group</taxon>
        <taxon>Chlamydia</taxon>
    </lineage>
</organism>
<accession>Q9Z6M6</accession>
<accession>Q7AHX0</accession>
<accession>Q7DE86</accession>
<accession>Q7VPQ6</accession>
<keyword id="KW-0029">Amino-acid transport</keyword>
<keyword id="KW-0998">Cell outer membrane</keyword>
<keyword id="KW-0406">Ion transport</keyword>
<keyword id="KW-0472">Membrane</keyword>
<keyword id="KW-0626">Porin</keyword>
<keyword id="KW-0732">Signal</keyword>
<keyword id="KW-0812">Transmembrane</keyword>
<keyword id="KW-1134">Transmembrane beta strand</keyword>
<keyword id="KW-0813">Transport</keyword>
<keyword id="KW-0843">Virulence</keyword>